<feature type="chain" id="PRO_1000130601" description="Nucleotide-binding protein BCAH187_A1318">
    <location>
        <begin position="1"/>
        <end position="163"/>
    </location>
</feature>
<protein>
    <recommendedName>
        <fullName evidence="1">Nucleotide-binding protein BCAH187_A1318</fullName>
    </recommendedName>
</protein>
<dbReference type="EMBL" id="CP001177">
    <property type="protein sequence ID" value="ACJ77806.1"/>
    <property type="molecule type" value="Genomic_DNA"/>
</dbReference>
<dbReference type="SMR" id="B7HZT6"/>
<dbReference type="KEGG" id="bcr:BCAH187_A1318"/>
<dbReference type="HOGENOM" id="CLU_099839_1_0_9"/>
<dbReference type="Proteomes" id="UP000002214">
    <property type="component" value="Chromosome"/>
</dbReference>
<dbReference type="GO" id="GO:0005829">
    <property type="term" value="C:cytosol"/>
    <property type="evidence" value="ECO:0007669"/>
    <property type="project" value="TreeGrafter"/>
</dbReference>
<dbReference type="GO" id="GO:0000166">
    <property type="term" value="F:nucleotide binding"/>
    <property type="evidence" value="ECO:0007669"/>
    <property type="project" value="TreeGrafter"/>
</dbReference>
<dbReference type="CDD" id="cd11740">
    <property type="entry name" value="YajQ_like"/>
    <property type="match status" value="1"/>
</dbReference>
<dbReference type="FunFam" id="3.30.70.990:FF:000002">
    <property type="entry name" value="UPF0234 protein LEP1GSC067_4943"/>
    <property type="match status" value="1"/>
</dbReference>
<dbReference type="FunFam" id="3.30.70.860:FF:000003">
    <property type="entry name" value="UPF0234 protein YBT020_06460"/>
    <property type="match status" value="1"/>
</dbReference>
<dbReference type="Gene3D" id="3.30.70.860">
    <property type="match status" value="1"/>
</dbReference>
<dbReference type="Gene3D" id="3.30.70.990">
    <property type="entry name" value="YajQ-like, domain 2"/>
    <property type="match status" value="1"/>
</dbReference>
<dbReference type="HAMAP" id="MF_00632">
    <property type="entry name" value="YajQ"/>
    <property type="match status" value="1"/>
</dbReference>
<dbReference type="InterPro" id="IPR007551">
    <property type="entry name" value="DUF520"/>
</dbReference>
<dbReference type="InterPro" id="IPR035571">
    <property type="entry name" value="UPF0234-like_C"/>
</dbReference>
<dbReference type="InterPro" id="IPR035570">
    <property type="entry name" value="UPF0234_N"/>
</dbReference>
<dbReference type="InterPro" id="IPR036183">
    <property type="entry name" value="YajQ-like_sf"/>
</dbReference>
<dbReference type="NCBIfam" id="NF003819">
    <property type="entry name" value="PRK05412.1"/>
    <property type="match status" value="1"/>
</dbReference>
<dbReference type="PANTHER" id="PTHR30476">
    <property type="entry name" value="UPF0234 PROTEIN YAJQ"/>
    <property type="match status" value="1"/>
</dbReference>
<dbReference type="PANTHER" id="PTHR30476:SF0">
    <property type="entry name" value="UPF0234 PROTEIN YAJQ"/>
    <property type="match status" value="1"/>
</dbReference>
<dbReference type="Pfam" id="PF04461">
    <property type="entry name" value="DUF520"/>
    <property type="match status" value="1"/>
</dbReference>
<dbReference type="SUPFAM" id="SSF89963">
    <property type="entry name" value="YajQ-like"/>
    <property type="match status" value="2"/>
</dbReference>
<evidence type="ECO:0000255" key="1">
    <source>
        <dbReference type="HAMAP-Rule" id="MF_00632"/>
    </source>
</evidence>
<accession>B7HZT6</accession>
<gene>
    <name type="ordered locus">BCAH187_A1318</name>
</gene>
<keyword id="KW-0547">Nucleotide-binding</keyword>
<comment type="function">
    <text evidence="1">Nucleotide-binding protein.</text>
</comment>
<comment type="similarity">
    <text evidence="1">Belongs to the YajQ family.</text>
</comment>
<sequence>MAKDSSFDIVSKVELPEVTNAINTALKEIQNRYDFKGSKSDIKLEKEVLVLTSDDEFKLEQVKDVLISKLVKRNVPIKNLDYGKVEAAAGNTVRQRATLQQGIDKDNAKKINNIIKEMKLKVKTQVQDDQVRVTAKSRDDLQAVIAAVRSADLPIDVQFINYR</sequence>
<name>Y1318_BACC7</name>
<reference key="1">
    <citation type="submission" date="2008-10" db="EMBL/GenBank/DDBJ databases">
        <title>Genome sequence of Bacillus cereus AH187.</title>
        <authorList>
            <person name="Dodson R.J."/>
            <person name="Durkin A.S."/>
            <person name="Rosovitz M.J."/>
            <person name="Rasko D.A."/>
            <person name="Kolsto A.B."/>
            <person name="Okstad O.A."/>
            <person name="Ravel J."/>
            <person name="Sutton G."/>
        </authorList>
    </citation>
    <scope>NUCLEOTIDE SEQUENCE [LARGE SCALE GENOMIC DNA]</scope>
    <source>
        <strain>AH187</strain>
    </source>
</reference>
<organism>
    <name type="scientific">Bacillus cereus (strain AH187)</name>
    <dbReference type="NCBI Taxonomy" id="405534"/>
    <lineage>
        <taxon>Bacteria</taxon>
        <taxon>Bacillati</taxon>
        <taxon>Bacillota</taxon>
        <taxon>Bacilli</taxon>
        <taxon>Bacillales</taxon>
        <taxon>Bacillaceae</taxon>
        <taxon>Bacillus</taxon>
        <taxon>Bacillus cereus group</taxon>
    </lineage>
</organism>
<proteinExistence type="inferred from homology"/>